<organism>
    <name type="scientific">Salmonella schwarzengrund (strain CVM19633)</name>
    <dbReference type="NCBI Taxonomy" id="439843"/>
    <lineage>
        <taxon>Bacteria</taxon>
        <taxon>Pseudomonadati</taxon>
        <taxon>Pseudomonadota</taxon>
        <taxon>Gammaproteobacteria</taxon>
        <taxon>Enterobacterales</taxon>
        <taxon>Enterobacteriaceae</taxon>
        <taxon>Salmonella</taxon>
    </lineage>
</organism>
<accession>B4TWE3</accession>
<protein>
    <recommendedName>
        <fullName evidence="1">Phosphoglucosamine mutase</fullName>
        <ecNumber evidence="1">5.4.2.10</ecNumber>
    </recommendedName>
</protein>
<reference key="1">
    <citation type="journal article" date="2011" name="J. Bacteriol.">
        <title>Comparative genomics of 28 Salmonella enterica isolates: evidence for CRISPR-mediated adaptive sublineage evolution.</title>
        <authorList>
            <person name="Fricke W.F."/>
            <person name="Mammel M.K."/>
            <person name="McDermott P.F."/>
            <person name="Tartera C."/>
            <person name="White D.G."/>
            <person name="Leclerc J.E."/>
            <person name="Ravel J."/>
            <person name="Cebula T.A."/>
        </authorList>
    </citation>
    <scope>NUCLEOTIDE SEQUENCE [LARGE SCALE GENOMIC DNA]</scope>
    <source>
        <strain>CVM19633</strain>
    </source>
</reference>
<name>GLMM_SALSV</name>
<dbReference type="EC" id="5.4.2.10" evidence="1"/>
<dbReference type="EMBL" id="CP001127">
    <property type="protein sequence ID" value="ACF90437.1"/>
    <property type="molecule type" value="Genomic_DNA"/>
</dbReference>
<dbReference type="RefSeq" id="WP_000071169.1">
    <property type="nucleotide sequence ID" value="NC_011094.1"/>
</dbReference>
<dbReference type="SMR" id="B4TWE3"/>
<dbReference type="KEGG" id="sew:SeSA_A3483"/>
<dbReference type="HOGENOM" id="CLU_016950_7_0_6"/>
<dbReference type="Proteomes" id="UP000001865">
    <property type="component" value="Chromosome"/>
</dbReference>
<dbReference type="GO" id="GO:0005829">
    <property type="term" value="C:cytosol"/>
    <property type="evidence" value="ECO:0007669"/>
    <property type="project" value="TreeGrafter"/>
</dbReference>
<dbReference type="GO" id="GO:0000287">
    <property type="term" value="F:magnesium ion binding"/>
    <property type="evidence" value="ECO:0007669"/>
    <property type="project" value="UniProtKB-UniRule"/>
</dbReference>
<dbReference type="GO" id="GO:0008966">
    <property type="term" value="F:phosphoglucosamine mutase activity"/>
    <property type="evidence" value="ECO:0007669"/>
    <property type="project" value="UniProtKB-UniRule"/>
</dbReference>
<dbReference type="GO" id="GO:0004615">
    <property type="term" value="F:phosphomannomutase activity"/>
    <property type="evidence" value="ECO:0007669"/>
    <property type="project" value="TreeGrafter"/>
</dbReference>
<dbReference type="GO" id="GO:0005975">
    <property type="term" value="P:carbohydrate metabolic process"/>
    <property type="evidence" value="ECO:0007669"/>
    <property type="project" value="InterPro"/>
</dbReference>
<dbReference type="GO" id="GO:0009252">
    <property type="term" value="P:peptidoglycan biosynthetic process"/>
    <property type="evidence" value="ECO:0007669"/>
    <property type="project" value="TreeGrafter"/>
</dbReference>
<dbReference type="GO" id="GO:0006048">
    <property type="term" value="P:UDP-N-acetylglucosamine biosynthetic process"/>
    <property type="evidence" value="ECO:0007669"/>
    <property type="project" value="TreeGrafter"/>
</dbReference>
<dbReference type="CDD" id="cd05802">
    <property type="entry name" value="GlmM"/>
    <property type="match status" value="1"/>
</dbReference>
<dbReference type="FunFam" id="3.30.310.50:FF:000001">
    <property type="entry name" value="Phosphoglucosamine mutase"/>
    <property type="match status" value="1"/>
</dbReference>
<dbReference type="FunFam" id="3.40.120.10:FF:000001">
    <property type="entry name" value="Phosphoglucosamine mutase"/>
    <property type="match status" value="1"/>
</dbReference>
<dbReference type="FunFam" id="3.40.120.10:FF:000002">
    <property type="entry name" value="Phosphoglucosamine mutase"/>
    <property type="match status" value="1"/>
</dbReference>
<dbReference type="Gene3D" id="3.40.120.10">
    <property type="entry name" value="Alpha-D-Glucose-1,6-Bisphosphate, subunit A, domain 3"/>
    <property type="match status" value="3"/>
</dbReference>
<dbReference type="Gene3D" id="3.30.310.50">
    <property type="entry name" value="Alpha-D-phosphohexomutase, C-terminal domain"/>
    <property type="match status" value="1"/>
</dbReference>
<dbReference type="HAMAP" id="MF_01554_B">
    <property type="entry name" value="GlmM_B"/>
    <property type="match status" value="1"/>
</dbReference>
<dbReference type="InterPro" id="IPR005844">
    <property type="entry name" value="A-D-PHexomutase_a/b/a-I"/>
</dbReference>
<dbReference type="InterPro" id="IPR016055">
    <property type="entry name" value="A-D-PHexomutase_a/b/a-I/II/III"/>
</dbReference>
<dbReference type="InterPro" id="IPR005845">
    <property type="entry name" value="A-D-PHexomutase_a/b/a-II"/>
</dbReference>
<dbReference type="InterPro" id="IPR005846">
    <property type="entry name" value="A-D-PHexomutase_a/b/a-III"/>
</dbReference>
<dbReference type="InterPro" id="IPR005843">
    <property type="entry name" value="A-D-PHexomutase_C"/>
</dbReference>
<dbReference type="InterPro" id="IPR036900">
    <property type="entry name" value="A-D-PHexomutase_C_sf"/>
</dbReference>
<dbReference type="InterPro" id="IPR016066">
    <property type="entry name" value="A-D-PHexomutase_CS"/>
</dbReference>
<dbReference type="InterPro" id="IPR005841">
    <property type="entry name" value="Alpha-D-phosphohexomutase_SF"/>
</dbReference>
<dbReference type="InterPro" id="IPR006352">
    <property type="entry name" value="GlmM_bact"/>
</dbReference>
<dbReference type="InterPro" id="IPR050060">
    <property type="entry name" value="Phosphoglucosamine_mutase"/>
</dbReference>
<dbReference type="NCBIfam" id="TIGR01455">
    <property type="entry name" value="glmM"/>
    <property type="match status" value="1"/>
</dbReference>
<dbReference type="NCBIfam" id="NF008139">
    <property type="entry name" value="PRK10887.1"/>
    <property type="match status" value="1"/>
</dbReference>
<dbReference type="PANTHER" id="PTHR42946:SF1">
    <property type="entry name" value="PHOSPHOGLUCOMUTASE (ALPHA-D-GLUCOSE-1,6-BISPHOSPHATE-DEPENDENT)"/>
    <property type="match status" value="1"/>
</dbReference>
<dbReference type="PANTHER" id="PTHR42946">
    <property type="entry name" value="PHOSPHOHEXOSE MUTASE"/>
    <property type="match status" value="1"/>
</dbReference>
<dbReference type="Pfam" id="PF02878">
    <property type="entry name" value="PGM_PMM_I"/>
    <property type="match status" value="1"/>
</dbReference>
<dbReference type="Pfam" id="PF02879">
    <property type="entry name" value="PGM_PMM_II"/>
    <property type="match status" value="1"/>
</dbReference>
<dbReference type="Pfam" id="PF02880">
    <property type="entry name" value="PGM_PMM_III"/>
    <property type="match status" value="1"/>
</dbReference>
<dbReference type="Pfam" id="PF00408">
    <property type="entry name" value="PGM_PMM_IV"/>
    <property type="match status" value="1"/>
</dbReference>
<dbReference type="PRINTS" id="PR00509">
    <property type="entry name" value="PGMPMM"/>
</dbReference>
<dbReference type="SUPFAM" id="SSF55957">
    <property type="entry name" value="Phosphoglucomutase, C-terminal domain"/>
    <property type="match status" value="1"/>
</dbReference>
<dbReference type="SUPFAM" id="SSF53738">
    <property type="entry name" value="Phosphoglucomutase, first 3 domains"/>
    <property type="match status" value="3"/>
</dbReference>
<dbReference type="PROSITE" id="PS00710">
    <property type="entry name" value="PGM_PMM"/>
    <property type="match status" value="1"/>
</dbReference>
<gene>
    <name evidence="1" type="primary">glmM</name>
    <name type="ordered locus">SeSA_A3483</name>
</gene>
<comment type="function">
    <text evidence="1">Catalyzes the conversion of glucosamine-6-phosphate to glucosamine-1-phosphate.</text>
</comment>
<comment type="catalytic activity">
    <reaction evidence="1">
        <text>alpha-D-glucosamine 1-phosphate = D-glucosamine 6-phosphate</text>
        <dbReference type="Rhea" id="RHEA:23424"/>
        <dbReference type="ChEBI" id="CHEBI:58516"/>
        <dbReference type="ChEBI" id="CHEBI:58725"/>
        <dbReference type="EC" id="5.4.2.10"/>
    </reaction>
</comment>
<comment type="cofactor">
    <cofactor evidence="1">
        <name>Mg(2+)</name>
        <dbReference type="ChEBI" id="CHEBI:18420"/>
    </cofactor>
    <text evidence="1">Binds 1 Mg(2+) ion per subunit.</text>
</comment>
<comment type="PTM">
    <text evidence="1">Activated by phosphorylation.</text>
</comment>
<comment type="similarity">
    <text evidence="1">Belongs to the phosphohexose mutase family.</text>
</comment>
<keyword id="KW-0413">Isomerase</keyword>
<keyword id="KW-0460">Magnesium</keyword>
<keyword id="KW-0479">Metal-binding</keyword>
<keyword id="KW-0597">Phosphoprotein</keyword>
<sequence length="445" mass="47441">MSNRKYFGTDGIRGRVGNAPITPDFVLKLGWAAGKVLARHGSRKIIIGKDTRISGYMLESALEAGLAAAGLSASFTGPMPTPAVAYLTRTFRAEAGIVISASHNPFYDNGIKFFSIDGTKLPDDVEEAIEAEMEKEITCVDSAELGKASRIVDAAGRYIEFCKGTFPNELSLNGLKVVVDCANGATYHIAPNVLRELGATVIAIGCEPNGVNINEEVGATDVRALQARVLAEKADLGIALDGDGDRVIMVDHEGNKVDGDQIMYIIAREGLRQGQLRGGAVGTLMSNMGLELALKQLGIPFARAKVGDRYVLEKLQEKGWRIGAENSGHVILLDKTTTGDGIVAGLQVLAAMVRNHMSLHDLCSGMKMFPQILVNVRYTAGSGDPLENEAVKAVTADVEATLGNRGRVLLRKSGTEPLIRVMVEGEDEAQVTAFAHRIADAVKAV</sequence>
<feature type="chain" id="PRO_1000201140" description="Phosphoglucosamine mutase">
    <location>
        <begin position="1"/>
        <end position="445"/>
    </location>
</feature>
<feature type="active site" description="Phosphoserine intermediate" evidence="1">
    <location>
        <position position="102"/>
    </location>
</feature>
<feature type="binding site" description="via phosphate group" evidence="1">
    <location>
        <position position="102"/>
    </location>
    <ligand>
        <name>Mg(2+)</name>
        <dbReference type="ChEBI" id="CHEBI:18420"/>
    </ligand>
</feature>
<feature type="binding site" evidence="1">
    <location>
        <position position="241"/>
    </location>
    <ligand>
        <name>Mg(2+)</name>
        <dbReference type="ChEBI" id="CHEBI:18420"/>
    </ligand>
</feature>
<feature type="binding site" evidence="1">
    <location>
        <position position="243"/>
    </location>
    <ligand>
        <name>Mg(2+)</name>
        <dbReference type="ChEBI" id="CHEBI:18420"/>
    </ligand>
</feature>
<feature type="binding site" evidence="1">
    <location>
        <position position="245"/>
    </location>
    <ligand>
        <name>Mg(2+)</name>
        <dbReference type="ChEBI" id="CHEBI:18420"/>
    </ligand>
</feature>
<feature type="modified residue" description="Phosphoserine" evidence="1">
    <location>
        <position position="102"/>
    </location>
</feature>
<evidence type="ECO:0000255" key="1">
    <source>
        <dbReference type="HAMAP-Rule" id="MF_01554"/>
    </source>
</evidence>
<proteinExistence type="inferred from homology"/>